<proteinExistence type="inferred from homology"/>
<evidence type="ECO:0000255" key="1">
    <source>
        <dbReference type="HAMAP-Rule" id="MF_00641"/>
    </source>
</evidence>
<evidence type="ECO:0000256" key="2">
    <source>
        <dbReference type="SAM" id="MobiDB-lite"/>
    </source>
</evidence>
<organism>
    <name type="scientific">Chelativorans sp. (strain BNC1)</name>
    <dbReference type="NCBI Taxonomy" id="266779"/>
    <lineage>
        <taxon>Bacteria</taxon>
        <taxon>Pseudomonadati</taxon>
        <taxon>Pseudomonadota</taxon>
        <taxon>Alphaproteobacteria</taxon>
        <taxon>Hyphomicrobiales</taxon>
        <taxon>Phyllobacteriaceae</taxon>
        <taxon>Chelativorans</taxon>
    </lineage>
</organism>
<dbReference type="EC" id="2.3.3.9" evidence="1"/>
<dbReference type="EMBL" id="CP000390">
    <property type="protein sequence ID" value="ABG65282.1"/>
    <property type="molecule type" value="Genomic_DNA"/>
</dbReference>
<dbReference type="SMR" id="Q11BE3"/>
<dbReference type="STRING" id="266779.Meso_3915"/>
<dbReference type="KEGG" id="mes:Meso_3915"/>
<dbReference type="eggNOG" id="COG2225">
    <property type="taxonomic scope" value="Bacteria"/>
</dbReference>
<dbReference type="HOGENOM" id="CLU_028446_1_0_5"/>
<dbReference type="OrthoDB" id="9762054at2"/>
<dbReference type="UniPathway" id="UPA00703">
    <property type="reaction ID" value="UER00720"/>
</dbReference>
<dbReference type="GO" id="GO:0005829">
    <property type="term" value="C:cytosol"/>
    <property type="evidence" value="ECO:0007669"/>
    <property type="project" value="TreeGrafter"/>
</dbReference>
<dbReference type="GO" id="GO:0000287">
    <property type="term" value="F:magnesium ion binding"/>
    <property type="evidence" value="ECO:0007669"/>
    <property type="project" value="TreeGrafter"/>
</dbReference>
<dbReference type="GO" id="GO:0004474">
    <property type="term" value="F:malate synthase activity"/>
    <property type="evidence" value="ECO:0007669"/>
    <property type="project" value="UniProtKB-UniRule"/>
</dbReference>
<dbReference type="GO" id="GO:0009436">
    <property type="term" value="P:glyoxylate catabolic process"/>
    <property type="evidence" value="ECO:0007669"/>
    <property type="project" value="TreeGrafter"/>
</dbReference>
<dbReference type="GO" id="GO:0006097">
    <property type="term" value="P:glyoxylate cycle"/>
    <property type="evidence" value="ECO:0007669"/>
    <property type="project" value="UniProtKB-UniRule"/>
</dbReference>
<dbReference type="GO" id="GO:0006099">
    <property type="term" value="P:tricarboxylic acid cycle"/>
    <property type="evidence" value="ECO:0007669"/>
    <property type="project" value="UniProtKB-KW"/>
</dbReference>
<dbReference type="CDD" id="cd00728">
    <property type="entry name" value="malate_synt_G"/>
    <property type="match status" value="1"/>
</dbReference>
<dbReference type="FunFam" id="3.20.20.360:FF:000002">
    <property type="entry name" value="Malate synthase G"/>
    <property type="match status" value="1"/>
</dbReference>
<dbReference type="Gene3D" id="3.20.20.360">
    <property type="entry name" value="Malate synthase, domain 3"/>
    <property type="match status" value="2"/>
</dbReference>
<dbReference type="Gene3D" id="1.20.1220.12">
    <property type="entry name" value="Malate synthase, domain III"/>
    <property type="match status" value="1"/>
</dbReference>
<dbReference type="HAMAP" id="MF_00641">
    <property type="entry name" value="Malate_synth_G"/>
    <property type="match status" value="1"/>
</dbReference>
<dbReference type="InterPro" id="IPR044856">
    <property type="entry name" value="Malate_synth_C_sf"/>
</dbReference>
<dbReference type="InterPro" id="IPR011076">
    <property type="entry name" value="Malate_synth_sf"/>
</dbReference>
<dbReference type="InterPro" id="IPR001465">
    <property type="entry name" value="Malate_synthase_TIM"/>
</dbReference>
<dbReference type="InterPro" id="IPR006253">
    <property type="entry name" value="Malate_synthG"/>
</dbReference>
<dbReference type="InterPro" id="IPR048355">
    <property type="entry name" value="MS_C"/>
</dbReference>
<dbReference type="InterPro" id="IPR048356">
    <property type="entry name" value="MS_N"/>
</dbReference>
<dbReference type="InterPro" id="IPR046363">
    <property type="entry name" value="MS_N_TIM-barrel_dom"/>
</dbReference>
<dbReference type="InterPro" id="IPR048357">
    <property type="entry name" value="MSG_insertion"/>
</dbReference>
<dbReference type="NCBIfam" id="TIGR01345">
    <property type="entry name" value="malate_syn_G"/>
    <property type="match status" value="1"/>
</dbReference>
<dbReference type="NCBIfam" id="NF002825">
    <property type="entry name" value="PRK02999.1"/>
    <property type="match status" value="1"/>
</dbReference>
<dbReference type="PANTHER" id="PTHR42739">
    <property type="entry name" value="MALATE SYNTHASE G"/>
    <property type="match status" value="1"/>
</dbReference>
<dbReference type="PANTHER" id="PTHR42739:SF1">
    <property type="entry name" value="MALATE SYNTHASE G"/>
    <property type="match status" value="1"/>
</dbReference>
<dbReference type="Pfam" id="PF20659">
    <property type="entry name" value="MS_C"/>
    <property type="match status" value="1"/>
</dbReference>
<dbReference type="Pfam" id="PF20656">
    <property type="entry name" value="MS_N"/>
    <property type="match status" value="1"/>
</dbReference>
<dbReference type="Pfam" id="PF01274">
    <property type="entry name" value="MS_TIM-barrel"/>
    <property type="match status" value="1"/>
</dbReference>
<dbReference type="Pfam" id="PF20658">
    <property type="entry name" value="MSG_insertion"/>
    <property type="match status" value="1"/>
</dbReference>
<dbReference type="SUPFAM" id="SSF51645">
    <property type="entry name" value="Malate synthase G"/>
    <property type="match status" value="1"/>
</dbReference>
<keyword id="KW-0963">Cytoplasm</keyword>
<keyword id="KW-0329">Glyoxylate bypass</keyword>
<keyword id="KW-0460">Magnesium</keyword>
<keyword id="KW-0479">Metal-binding</keyword>
<keyword id="KW-0558">Oxidation</keyword>
<keyword id="KW-0808">Transferase</keyword>
<keyword id="KW-0816">Tricarboxylic acid cycle</keyword>
<reference key="1">
    <citation type="submission" date="2006-06" db="EMBL/GenBank/DDBJ databases">
        <title>Complete sequence of chromosome of Mesorhizobium sp. BNC1.</title>
        <authorList>
            <consortium name="US DOE Joint Genome Institute"/>
            <person name="Copeland A."/>
            <person name="Lucas S."/>
            <person name="Lapidus A."/>
            <person name="Barry K."/>
            <person name="Detter J.C."/>
            <person name="Glavina del Rio T."/>
            <person name="Hammon N."/>
            <person name="Israni S."/>
            <person name="Dalin E."/>
            <person name="Tice H."/>
            <person name="Pitluck S."/>
            <person name="Chertkov O."/>
            <person name="Brettin T."/>
            <person name="Bruce D."/>
            <person name="Han C."/>
            <person name="Tapia R."/>
            <person name="Gilna P."/>
            <person name="Schmutz J."/>
            <person name="Larimer F."/>
            <person name="Land M."/>
            <person name="Hauser L."/>
            <person name="Kyrpides N."/>
            <person name="Mikhailova N."/>
            <person name="Richardson P."/>
        </authorList>
    </citation>
    <scope>NUCLEOTIDE SEQUENCE [LARGE SCALE GENOMIC DNA]</scope>
    <source>
        <strain>BNC1</strain>
    </source>
</reference>
<sequence length="732" mass="80279">MTDRVEINGLKIARELHDFAMNEVLPGTGVDAETFWHSLSQIVHTLSPRNRALLSKRDDLQAKIDAWHRANRAPSDLQAYEAFLREIGYLLPEGPDFKVTTSDVDPEISQIAGPQLVVPVMNARYALNAANARWGSLYDALYGTDAIPETAGAERGKGFNPQRGEKVIAWARKFLDESIPLRNASWADAARLSVKDGKLAVDFDGAAADLADPAQFTGYSGEADSPREVVLARNGLHVRIIIDRNHPIGSTDRAGIADVVMEAALTTIMDCEDSVAAVDAEDKVLAYRNWLGLMKGDLEETFQKGGTTVTRKLNQDIRLTAPDGSPIKLPGRSLMLVRNVGHLMTNPAILDRDGKEVPEGIMDAMFTALIALHDIGPNGRRMNSRAGSMYVVKPKMHGPEEVAFAVELFGSVEDALGMRPNTIKMGIMDEERRTTVNLKECIRAASERVVFINTGFLDRTGDEIHTSMEAGPMIRKGDMKQSTWIAAYENWNVDIGLLCGLSGRAQIGKGMWAMPDLMAAMLDQKIAHPKAGANTAWVPSPTAATLHATHYHQVDVKAVQEGLKSRTRAKLGDILSIPVAVRPNWSPEDIRQELDNNAQGILGYVVRWIDQGVGCSKVPDINNVGLMEDRATLRISSQHIANWLHHGVVTPEQVMETMKRMAEVVDSQNAGDPDYEPIAPNFEDSIAFQAACDLVFKGREQPNGYTEPVLHARRLQKKAQDRKGAAADSSRG</sequence>
<comment type="function">
    <text evidence="1">Involved in the glycolate utilization. Catalyzes the condensation and subsequent hydrolysis of acetyl-coenzyme A (acetyl-CoA) and glyoxylate to form malate and CoA.</text>
</comment>
<comment type="catalytic activity">
    <reaction evidence="1">
        <text>glyoxylate + acetyl-CoA + H2O = (S)-malate + CoA + H(+)</text>
        <dbReference type="Rhea" id="RHEA:18181"/>
        <dbReference type="ChEBI" id="CHEBI:15377"/>
        <dbReference type="ChEBI" id="CHEBI:15378"/>
        <dbReference type="ChEBI" id="CHEBI:15589"/>
        <dbReference type="ChEBI" id="CHEBI:36655"/>
        <dbReference type="ChEBI" id="CHEBI:57287"/>
        <dbReference type="ChEBI" id="CHEBI:57288"/>
        <dbReference type="EC" id="2.3.3.9"/>
    </reaction>
</comment>
<comment type="cofactor">
    <cofactor evidence="1">
        <name>Mg(2+)</name>
        <dbReference type="ChEBI" id="CHEBI:18420"/>
    </cofactor>
</comment>
<comment type="pathway">
    <text evidence="1">Carbohydrate metabolism; glyoxylate cycle; (S)-malate from isocitrate: step 2/2.</text>
</comment>
<comment type="subunit">
    <text evidence="1">Monomer.</text>
</comment>
<comment type="subcellular location">
    <subcellularLocation>
        <location evidence="1">Cytoplasm</location>
    </subcellularLocation>
</comment>
<comment type="similarity">
    <text evidence="1">Belongs to the malate synthase family. GlcB subfamily.</text>
</comment>
<protein>
    <recommendedName>
        <fullName evidence="1">Malate synthase G</fullName>
        <ecNumber evidence="1">2.3.3.9</ecNumber>
    </recommendedName>
</protein>
<gene>
    <name evidence="1" type="primary">glcB</name>
    <name type="ordered locus">Meso_3915</name>
</gene>
<feature type="chain" id="PRO_1000130891" description="Malate synthase G">
    <location>
        <begin position="1"/>
        <end position="732"/>
    </location>
</feature>
<feature type="region of interest" description="Disordered" evidence="2">
    <location>
        <begin position="702"/>
        <end position="732"/>
    </location>
</feature>
<feature type="compositionally biased region" description="Basic and acidic residues" evidence="2">
    <location>
        <begin position="718"/>
        <end position="732"/>
    </location>
</feature>
<feature type="active site" description="Proton acceptor" evidence="1">
    <location>
        <position position="338"/>
    </location>
</feature>
<feature type="active site" description="Proton donor" evidence="1">
    <location>
        <position position="629"/>
    </location>
</feature>
<feature type="binding site" evidence="1">
    <location>
        <position position="117"/>
    </location>
    <ligand>
        <name>acetyl-CoA</name>
        <dbReference type="ChEBI" id="CHEBI:57288"/>
    </ligand>
</feature>
<feature type="binding site" evidence="1">
    <location>
        <begin position="124"/>
        <end position="125"/>
    </location>
    <ligand>
        <name>acetyl-CoA</name>
        <dbReference type="ChEBI" id="CHEBI:57288"/>
    </ligand>
</feature>
<feature type="binding site" evidence="1">
    <location>
        <position position="274"/>
    </location>
    <ligand>
        <name>acetyl-CoA</name>
        <dbReference type="ChEBI" id="CHEBI:57288"/>
    </ligand>
</feature>
<feature type="binding site" evidence="1">
    <location>
        <position position="311"/>
    </location>
    <ligand>
        <name>acetyl-CoA</name>
        <dbReference type="ChEBI" id="CHEBI:57288"/>
    </ligand>
</feature>
<feature type="binding site" evidence="1">
    <location>
        <position position="338"/>
    </location>
    <ligand>
        <name>glyoxylate</name>
        <dbReference type="ChEBI" id="CHEBI:36655"/>
    </ligand>
</feature>
<feature type="binding site" evidence="1">
    <location>
        <position position="430"/>
    </location>
    <ligand>
        <name>glyoxylate</name>
        <dbReference type="ChEBI" id="CHEBI:36655"/>
    </ligand>
</feature>
<feature type="binding site" evidence="1">
    <location>
        <position position="430"/>
    </location>
    <ligand>
        <name>Mg(2+)</name>
        <dbReference type="ChEBI" id="CHEBI:18420"/>
    </ligand>
</feature>
<feature type="binding site" evidence="1">
    <location>
        <begin position="455"/>
        <end position="458"/>
    </location>
    <ligand>
        <name>glyoxylate</name>
        <dbReference type="ChEBI" id="CHEBI:36655"/>
    </ligand>
</feature>
<feature type="binding site" evidence="1">
    <location>
        <position position="458"/>
    </location>
    <ligand>
        <name>Mg(2+)</name>
        <dbReference type="ChEBI" id="CHEBI:18420"/>
    </ligand>
</feature>
<feature type="binding site" evidence="1">
    <location>
        <position position="539"/>
    </location>
    <ligand>
        <name>acetyl-CoA</name>
        <dbReference type="ChEBI" id="CHEBI:57288"/>
    </ligand>
</feature>
<feature type="modified residue" description="Cysteine sulfenic acid (-SOH)" evidence="1">
    <location>
        <position position="615"/>
    </location>
</feature>
<name>MASZ_CHESB</name>
<accession>Q11BE3</accession>